<feature type="chain" id="PRO_0000222886" description="Movement protein">
    <location>
        <begin position="1"/>
        <end position="190"/>
    </location>
</feature>
<name>MVP_CNV</name>
<comment type="function">
    <text evidence="1">Transports viral genome to neighboring plant cells directly through plasmosdesmata, without any budding. The movement protein allows efficient cell to cell propagation, by bypassing the host cell wall barrier (By similarity).</text>
</comment>
<comment type="subcellular location">
    <subcellularLocation>
        <location evidence="1">Host membrane</location>
    </subcellularLocation>
</comment>
<comment type="similarity">
    <text evidence="2">Belongs to the tombusvirus/aureusvirus movement protein p22 family.</text>
</comment>
<organism>
    <name type="scientific">Cucumber necrosis virus</name>
    <name type="common">CNV</name>
    <dbReference type="NCBI Taxonomy" id="12143"/>
    <lineage>
        <taxon>Viruses</taxon>
        <taxon>Riboviria</taxon>
        <taxon>Orthornavirae</taxon>
        <taxon>Kitrinoviricota</taxon>
        <taxon>Tolucaviricetes</taxon>
        <taxon>Tolivirales</taxon>
        <taxon>Tombusviridae</taxon>
        <taxon>Procedovirinae</taxon>
        <taxon>Tombusvirus</taxon>
        <taxon>Tombusvirus cucumis</taxon>
    </lineage>
</organism>
<protein>
    <recommendedName>
        <fullName>Movement protein</fullName>
    </recommendedName>
    <alternativeName>
        <fullName>p22</fullName>
    </alternativeName>
</protein>
<reference key="1">
    <citation type="journal article" date="1989" name="Virology">
        <title>Complete nucleotide sequence of the cucumber necrosis virus genome.</title>
        <authorList>
            <person name="Rochon D.M."/>
            <person name="Tremaine J.H."/>
        </authorList>
    </citation>
    <scope>NUCLEOTIDE SEQUENCE [GENOMIC RNA]</scope>
</reference>
<keyword id="KW-1043">Host membrane</keyword>
<keyword id="KW-0472">Membrane</keyword>
<keyword id="KW-0694">RNA-binding</keyword>
<keyword id="KW-0813">Transport</keyword>
<keyword id="KW-0916">Viral movement protein</keyword>
<sequence length="190" mass="21470">MDTEYEQVNKPWNELYKEATLGNKLTVNVGMEDVEVPLLPSNFLTKVRVSLSGGYITVRRVRIKIIPLVSRKAGVSGKLYLRDISDTTGRKLHCTELLDLGKEIRLTMQHLDFSVSARSDVPIVFGFEDLVSPYLEGRELFSVSLRWQFGLSAQCYSLPPAKWKVMYQEDALKALKPSKIKKASKTDSSV</sequence>
<accession>P15185</accession>
<dbReference type="EMBL" id="M25270">
    <property type="protein sequence ID" value="AAA42905.1"/>
    <property type="molecule type" value="Genomic_RNA"/>
</dbReference>
<dbReference type="PIR" id="JA0132">
    <property type="entry name" value="NKVGCN"/>
</dbReference>
<dbReference type="RefSeq" id="NP_040956.1">
    <property type="nucleotide sequence ID" value="NC_001469.1"/>
</dbReference>
<dbReference type="KEGG" id="vg:1493949"/>
<dbReference type="OrthoDB" id="9245at10239"/>
<dbReference type="Proteomes" id="UP000008565">
    <property type="component" value="Segment"/>
</dbReference>
<dbReference type="GO" id="GO:0033644">
    <property type="term" value="C:host cell membrane"/>
    <property type="evidence" value="ECO:0007669"/>
    <property type="project" value="UniProtKB-SubCell"/>
</dbReference>
<dbReference type="GO" id="GO:0016020">
    <property type="term" value="C:membrane"/>
    <property type="evidence" value="ECO:0007669"/>
    <property type="project" value="UniProtKB-KW"/>
</dbReference>
<dbReference type="GO" id="GO:0019028">
    <property type="term" value="C:viral capsid"/>
    <property type="evidence" value="ECO:0007669"/>
    <property type="project" value="InterPro"/>
</dbReference>
<dbReference type="GO" id="GO:0003723">
    <property type="term" value="F:RNA binding"/>
    <property type="evidence" value="ECO:0007669"/>
    <property type="project" value="UniProtKB-KW"/>
</dbReference>
<dbReference type="GO" id="GO:0046740">
    <property type="term" value="P:transport of virus in host, cell to cell"/>
    <property type="evidence" value="ECO:0007669"/>
    <property type="project" value="UniProtKB-KW"/>
</dbReference>
<dbReference type="InterPro" id="IPR005332">
    <property type="entry name" value="TBSV_p22"/>
</dbReference>
<dbReference type="Pfam" id="PF03558">
    <property type="entry name" value="TBSV_P22"/>
    <property type="match status" value="1"/>
</dbReference>
<gene>
    <name type="ORF">ORF3</name>
</gene>
<organismHost>
    <name type="scientific">Cucumis sativus</name>
    <name type="common">Cucumber</name>
    <dbReference type="NCBI Taxonomy" id="3659"/>
</organismHost>
<evidence type="ECO:0000250" key="1"/>
<evidence type="ECO:0000305" key="2"/>
<proteinExistence type="inferred from homology"/>